<protein>
    <recommendedName>
        <fullName evidence="1">Urease subunit alpha</fullName>
        <ecNumber evidence="1">3.5.1.5</ecNumber>
    </recommendedName>
    <alternativeName>
        <fullName evidence="1">Urea amidohydrolase subunit alpha</fullName>
    </alternativeName>
</protein>
<organism>
    <name type="scientific">Campylobacter lari</name>
    <dbReference type="NCBI Taxonomy" id="201"/>
    <lineage>
        <taxon>Bacteria</taxon>
        <taxon>Pseudomonadati</taxon>
        <taxon>Campylobacterota</taxon>
        <taxon>Epsilonproteobacteria</taxon>
        <taxon>Campylobacterales</taxon>
        <taxon>Campylobacteraceae</taxon>
        <taxon>Campylobacter</taxon>
    </lineage>
</organism>
<name>URE23_CAMLA</name>
<dbReference type="EC" id="3.5.1.5" evidence="1"/>
<dbReference type="EMBL" id="AB201709">
    <property type="protein sequence ID" value="BAD89501.1"/>
    <property type="molecule type" value="Genomic_DNA"/>
</dbReference>
<dbReference type="SMR" id="Q5FB24"/>
<dbReference type="UniPathway" id="UPA00258">
    <property type="reaction ID" value="UER00370"/>
</dbReference>
<dbReference type="GO" id="GO:0035550">
    <property type="term" value="C:urease complex"/>
    <property type="evidence" value="ECO:0007669"/>
    <property type="project" value="InterPro"/>
</dbReference>
<dbReference type="GO" id="GO:0016151">
    <property type="term" value="F:nickel cation binding"/>
    <property type="evidence" value="ECO:0007669"/>
    <property type="project" value="InterPro"/>
</dbReference>
<dbReference type="GO" id="GO:0009039">
    <property type="term" value="F:urease activity"/>
    <property type="evidence" value="ECO:0007669"/>
    <property type="project" value="UniProtKB-UniRule"/>
</dbReference>
<dbReference type="GO" id="GO:0043419">
    <property type="term" value="P:urea catabolic process"/>
    <property type="evidence" value="ECO:0007669"/>
    <property type="project" value="UniProtKB-UniRule"/>
</dbReference>
<dbReference type="CDD" id="cd00407">
    <property type="entry name" value="Urease_beta"/>
    <property type="match status" value="1"/>
</dbReference>
<dbReference type="CDD" id="cd00390">
    <property type="entry name" value="Urease_gamma"/>
    <property type="match status" value="1"/>
</dbReference>
<dbReference type="FunFam" id="2.10.150.10:FF:000001">
    <property type="entry name" value="Urease subunit beta"/>
    <property type="match status" value="1"/>
</dbReference>
<dbReference type="Gene3D" id="2.10.150.10">
    <property type="entry name" value="Urease, beta subunit"/>
    <property type="match status" value="1"/>
</dbReference>
<dbReference type="Gene3D" id="3.30.280.10">
    <property type="entry name" value="Urease, gamma-like subunit"/>
    <property type="match status" value="1"/>
</dbReference>
<dbReference type="HAMAP" id="MF_01954">
    <property type="entry name" value="Urease_beta"/>
    <property type="match status" value="1"/>
</dbReference>
<dbReference type="HAMAP" id="MF_01955">
    <property type="entry name" value="Urease_beta_gamma"/>
    <property type="match status" value="1"/>
</dbReference>
<dbReference type="InterPro" id="IPR002019">
    <property type="entry name" value="Urease_beta-like"/>
</dbReference>
<dbReference type="InterPro" id="IPR036461">
    <property type="entry name" value="Urease_betasu_sf"/>
</dbReference>
<dbReference type="InterPro" id="IPR008223">
    <property type="entry name" value="Urease_gamma-beta_su"/>
</dbReference>
<dbReference type="InterPro" id="IPR002026">
    <property type="entry name" value="Urease_gamma/gamma-beta_su"/>
</dbReference>
<dbReference type="InterPro" id="IPR036463">
    <property type="entry name" value="Urease_gamma_sf"/>
</dbReference>
<dbReference type="InterPro" id="IPR050069">
    <property type="entry name" value="Urease_subunit"/>
</dbReference>
<dbReference type="NCBIfam" id="NF009671">
    <property type="entry name" value="PRK13192.1"/>
    <property type="match status" value="1"/>
</dbReference>
<dbReference type="NCBIfam" id="NF009682">
    <property type="entry name" value="PRK13203.1"/>
    <property type="match status" value="1"/>
</dbReference>
<dbReference type="NCBIfam" id="TIGR00192">
    <property type="entry name" value="urease_beta"/>
    <property type="match status" value="1"/>
</dbReference>
<dbReference type="NCBIfam" id="TIGR00193">
    <property type="entry name" value="urease_gam"/>
    <property type="match status" value="1"/>
</dbReference>
<dbReference type="PANTHER" id="PTHR33569">
    <property type="entry name" value="UREASE"/>
    <property type="match status" value="1"/>
</dbReference>
<dbReference type="PANTHER" id="PTHR33569:SF1">
    <property type="entry name" value="UREASE"/>
    <property type="match status" value="1"/>
</dbReference>
<dbReference type="Pfam" id="PF00699">
    <property type="entry name" value="Urease_beta"/>
    <property type="match status" value="1"/>
</dbReference>
<dbReference type="Pfam" id="PF00547">
    <property type="entry name" value="Urease_gamma"/>
    <property type="match status" value="1"/>
</dbReference>
<dbReference type="PIRSF" id="PIRSF001225">
    <property type="entry name" value="Urease_gammabeta"/>
    <property type="match status" value="1"/>
</dbReference>
<dbReference type="SUPFAM" id="SSF51278">
    <property type="entry name" value="Urease, beta-subunit"/>
    <property type="match status" value="1"/>
</dbReference>
<dbReference type="SUPFAM" id="SSF54111">
    <property type="entry name" value="Urease, gamma-subunit"/>
    <property type="match status" value="1"/>
</dbReference>
<keyword id="KW-0963">Cytoplasm</keyword>
<keyword id="KW-0378">Hydrolase</keyword>
<sequence>MHFTQQQLQRLMLHYAGKIAKDRKEQKIKLNYNEALAYICYELMELARKNLSVSELMSIGKTLLTSEDVIDGVASMLDEIQIELPFEDGTKLVTIHEPIANDDKIKAGEIFLSSEFIVLNENKTSIEIKVSNKGDRPIQVGSHFHFFEVNRFLSFDREKAYGKRLNIASGTSVRFEPGEEKTVSLIEFGGLKKVLGFNNLCDDFINDENKTKALSKAKEKGFL</sequence>
<comment type="catalytic activity">
    <reaction evidence="1">
        <text>urea + 2 H2O + H(+) = hydrogencarbonate + 2 NH4(+)</text>
        <dbReference type="Rhea" id="RHEA:20557"/>
        <dbReference type="ChEBI" id="CHEBI:15377"/>
        <dbReference type="ChEBI" id="CHEBI:15378"/>
        <dbReference type="ChEBI" id="CHEBI:16199"/>
        <dbReference type="ChEBI" id="CHEBI:17544"/>
        <dbReference type="ChEBI" id="CHEBI:28938"/>
        <dbReference type="EC" id="3.5.1.5"/>
    </reaction>
</comment>
<comment type="pathway">
    <text evidence="1">Nitrogen metabolism; urea degradation; CO(2) and NH(3) from urea (urease route): step 1/1.</text>
</comment>
<comment type="subunit">
    <text evidence="1">Heterohexamer of 3 UreA (alpha) and 3 UreB (beta) subunits.</text>
</comment>
<comment type="subcellular location">
    <subcellularLocation>
        <location evidence="1">Cytoplasm</location>
    </subcellularLocation>
</comment>
<comment type="similarity">
    <text evidence="1">In the N-terminal section; belongs to the urease gamma subunit family.</text>
</comment>
<comment type="similarity">
    <text evidence="1">In the C-terminal section; belongs to the urease beta subunit family.</text>
</comment>
<comment type="caution">
    <text evidence="2">The orthologous protein is known as the gamma/beta subunit (UreAB) in most other bacteria.</text>
</comment>
<accession>Q5FB24</accession>
<feature type="chain" id="PRO_0000234196" description="Urease subunit alpha">
    <location>
        <begin position="1"/>
        <end position="223"/>
    </location>
</feature>
<feature type="region of interest" description="Urease gamma">
    <location>
        <begin position="1"/>
        <end position="101"/>
    </location>
</feature>
<feature type="region of interest" description="Urease beta">
    <location>
        <begin position="102"/>
        <end position="223"/>
    </location>
</feature>
<evidence type="ECO:0000255" key="1">
    <source>
        <dbReference type="HAMAP-Rule" id="MF_01955"/>
    </source>
</evidence>
<evidence type="ECO:0000305" key="2"/>
<reference key="1">
    <citation type="journal article" date="2006" name="Int. J. Hyg. Environ. Health">
        <title>Genetic heterogeneity of urease gene loci in urease-positive thermophilic Campylobacter (UPTC).</title>
        <authorList>
            <person name="Usui K."/>
            <person name="Iida H."/>
            <person name="Ueno H."/>
            <person name="Sekizuka T."/>
            <person name="Matsuda M."/>
            <person name="Murayama O."/>
            <person name="Cherie Millar B."/>
            <person name="Moore J.E."/>
        </authorList>
    </citation>
    <scope>NUCLEOTIDE SEQUENCE [GENOMIC DNA]</scope>
    <source>
        <strain>CF89-12</strain>
    </source>
</reference>
<proteinExistence type="inferred from homology"/>
<gene>
    <name evidence="1" type="primary">ureA</name>
</gene>